<comment type="function">
    <text>Core component of nucleosome. Nucleosomes wrap and compact DNA into chromatin, limiting DNA accessibility to the cellular machineries which require DNA as a template. Histones thereby play a central role in transcription regulation, DNA repair, DNA replication and chromosomal stability. DNA accessibility is regulated via a complex set of post-translational modifications of histones, also called histone code, and nucleosome remodeling.</text>
</comment>
<comment type="subunit">
    <text>The nucleosome is a histone octamer containing two molecules each of H2A, H2B, H3 and H4 assembled in one H3-H4 heterotetramer and two H2A-H2B heterodimers. The octamer wraps approximately 147 bp of DNA.</text>
</comment>
<comment type="subcellular location">
    <subcellularLocation>
        <location>Nucleus</location>
    </subcellularLocation>
    <subcellularLocation>
        <location>Chromosome</location>
    </subcellularLocation>
</comment>
<comment type="domain">
    <text>Contains 4 SPKK motifs which may interact with the minor groove of A/T-rich DNA sites. Phosphorylation of this motif may regulate DNA binding. This motif is reiterated in both termini of histone H1 and in the C-terminus of plant H2A, but its presence in the N-terminus seems to be unique to sea urchin histones H2B.</text>
</comment>
<comment type="PTM">
    <text evidence="1">Monoubiquitination gives a specific tag for epigenetic transcriptional activation and is also prerequisite for histone H3 'Lys-4' and 'Lys-79' methylation.</text>
</comment>
<comment type="PTM">
    <text evidence="1">Phosphorylated on SPKK motifs 3 and 4; which may regulate DNA binding. Dephosphorylated during maturation of spermatids to mature sperm and rephosphorylated at fertilization (By similarity).</text>
</comment>
<comment type="similarity">
    <text evidence="4">Belongs to the histone H2B family.</text>
</comment>
<accession>P13283</accession>
<sequence>MPRSPSKSSPKKGSPRKASPKRGGKGAKRAGKGGRRRTVVK</sequence>
<organism>
    <name type="scientific">Echinus esculentus</name>
    <name type="common">Sea urchin</name>
    <dbReference type="NCBI Taxonomy" id="7648"/>
    <lineage>
        <taxon>Eukaryota</taxon>
        <taxon>Metazoa</taxon>
        <taxon>Echinodermata</taxon>
        <taxon>Eleutherozoa</taxon>
        <taxon>Echinozoa</taxon>
        <taxon>Echinoidea</taxon>
        <taxon>Euechinoidea</taxon>
        <taxon>Echinacea</taxon>
        <taxon>Camarodonta</taxon>
        <taxon>Echinidea</taxon>
        <taxon>Echinidae</taxon>
        <taxon>Echinus</taxon>
    </lineage>
</organism>
<protein>
    <recommendedName>
        <fullName>Histone H2B.3, sperm</fullName>
    </recommendedName>
</protein>
<dbReference type="PIR" id="S07769">
    <property type="entry name" value="S07769"/>
</dbReference>
<dbReference type="SMR" id="P13283"/>
<dbReference type="GO" id="GO:0000786">
    <property type="term" value="C:nucleosome"/>
    <property type="evidence" value="ECO:0007669"/>
    <property type="project" value="UniProtKB-KW"/>
</dbReference>
<dbReference type="GO" id="GO:0005634">
    <property type="term" value="C:nucleus"/>
    <property type="evidence" value="ECO:0007669"/>
    <property type="project" value="UniProtKB-SubCell"/>
</dbReference>
<dbReference type="GO" id="GO:0003677">
    <property type="term" value="F:DNA binding"/>
    <property type="evidence" value="ECO:0007669"/>
    <property type="project" value="UniProtKB-KW"/>
</dbReference>
<feature type="initiator methionine" description="Removed" evidence="3">
    <location>
        <position position="1"/>
    </location>
</feature>
<feature type="chain" id="PRO_0000071885" description="Histone H2B.3, sperm">
    <location>
        <begin position="2"/>
        <end position="41" status="greater than"/>
    </location>
</feature>
<feature type="region of interest" description="Disordered" evidence="2">
    <location>
        <begin position="1"/>
        <end position="41"/>
    </location>
</feature>
<feature type="short sequence motif" description="SPKK motif 1">
    <location>
        <begin position="4"/>
        <end position="7"/>
    </location>
</feature>
<feature type="short sequence motif" description="SPKK motif 2">
    <location>
        <begin position="9"/>
        <end position="12"/>
    </location>
</feature>
<feature type="short sequence motif" description="SPKK motif 3">
    <location>
        <begin position="14"/>
        <end position="17"/>
    </location>
</feature>
<feature type="short sequence motif" description="SPKK motif 4">
    <location>
        <begin position="19"/>
        <end position="22"/>
    </location>
</feature>
<feature type="compositionally biased region" description="Basic residues" evidence="2">
    <location>
        <begin position="9"/>
        <end position="41"/>
    </location>
</feature>
<feature type="modified residue" description="Phosphoserine" evidence="1">
    <location>
        <position position="14"/>
    </location>
</feature>
<feature type="modified residue" description="Phosphoserine" evidence="1">
    <location>
        <position position="19"/>
    </location>
</feature>
<feature type="non-terminal residue">
    <location>
        <position position="41"/>
    </location>
</feature>
<evidence type="ECO:0000250" key="1"/>
<evidence type="ECO:0000256" key="2">
    <source>
        <dbReference type="SAM" id="MobiDB-lite"/>
    </source>
</evidence>
<evidence type="ECO:0000269" key="3">
    <source>
    </source>
</evidence>
<evidence type="ECO:0000305" key="4"/>
<keyword id="KW-0158">Chromosome</keyword>
<keyword id="KW-0903">Direct protein sequencing</keyword>
<keyword id="KW-0238">DNA-binding</keyword>
<keyword id="KW-0544">Nucleosome core</keyword>
<keyword id="KW-0539">Nucleus</keyword>
<keyword id="KW-0597">Phosphoprotein</keyword>
<keyword id="KW-0832">Ubl conjugation</keyword>
<proteinExistence type="evidence at protein level"/>
<name>H2BS3_ECHES</name>
<reference key="1">
    <citation type="journal article" date="1990" name="Eur. J. Biochem.">
        <title>Core histone-DNA interactions in sea urchin sperm chromatin. The N-terminal tail of H2B interacts with linker DNA.</title>
        <authorList>
            <person name="Hill C.S."/>
            <person name="Thomas J.O."/>
        </authorList>
    </citation>
    <scope>PROTEIN SEQUENCE OF 2-41</scope>
</reference>